<gene>
    <name evidence="1" type="primary">grpE</name>
    <name type="ordered locus">Veis_0980</name>
</gene>
<protein>
    <recommendedName>
        <fullName evidence="1">Protein GrpE</fullName>
    </recommendedName>
    <alternativeName>
        <fullName evidence="1">HSP-70 cofactor</fullName>
    </alternativeName>
</protein>
<proteinExistence type="inferred from homology"/>
<sequence length="181" mass="19302">MSDNSPTTPSAPAPEEVEAAMAAHADDELARLQGELAELKAKSAELADQFLRAKAEAENARRRAEDEVAKARKFGIESFAESLLPVADSLDAALAIKEATPQQLREGADATLRQLTSTLERNKVLAINPAAGTKFDPHQHQAISVVPAEQEANTVVAVLQKGYVIAERVLRPALVTVSASK</sequence>
<dbReference type="EMBL" id="CP000542">
    <property type="protein sequence ID" value="ABM56757.1"/>
    <property type="molecule type" value="Genomic_DNA"/>
</dbReference>
<dbReference type="RefSeq" id="WP_011808770.1">
    <property type="nucleotide sequence ID" value="NC_008786.1"/>
</dbReference>
<dbReference type="SMR" id="A1WGK0"/>
<dbReference type="STRING" id="391735.Veis_0980"/>
<dbReference type="GeneID" id="76459657"/>
<dbReference type="KEGG" id="vei:Veis_0980"/>
<dbReference type="eggNOG" id="COG0576">
    <property type="taxonomic scope" value="Bacteria"/>
</dbReference>
<dbReference type="HOGENOM" id="CLU_057217_6_1_4"/>
<dbReference type="OrthoDB" id="9789811at2"/>
<dbReference type="Proteomes" id="UP000000374">
    <property type="component" value="Chromosome"/>
</dbReference>
<dbReference type="GO" id="GO:0005829">
    <property type="term" value="C:cytosol"/>
    <property type="evidence" value="ECO:0007669"/>
    <property type="project" value="TreeGrafter"/>
</dbReference>
<dbReference type="GO" id="GO:0000774">
    <property type="term" value="F:adenyl-nucleotide exchange factor activity"/>
    <property type="evidence" value="ECO:0007669"/>
    <property type="project" value="InterPro"/>
</dbReference>
<dbReference type="GO" id="GO:0042803">
    <property type="term" value="F:protein homodimerization activity"/>
    <property type="evidence" value="ECO:0007669"/>
    <property type="project" value="InterPro"/>
</dbReference>
<dbReference type="GO" id="GO:0051087">
    <property type="term" value="F:protein-folding chaperone binding"/>
    <property type="evidence" value="ECO:0007669"/>
    <property type="project" value="InterPro"/>
</dbReference>
<dbReference type="GO" id="GO:0051082">
    <property type="term" value="F:unfolded protein binding"/>
    <property type="evidence" value="ECO:0007669"/>
    <property type="project" value="TreeGrafter"/>
</dbReference>
<dbReference type="GO" id="GO:0006457">
    <property type="term" value="P:protein folding"/>
    <property type="evidence" value="ECO:0007669"/>
    <property type="project" value="InterPro"/>
</dbReference>
<dbReference type="CDD" id="cd00446">
    <property type="entry name" value="GrpE"/>
    <property type="match status" value="1"/>
</dbReference>
<dbReference type="FunFam" id="2.30.22.10:FF:000001">
    <property type="entry name" value="Protein GrpE"/>
    <property type="match status" value="1"/>
</dbReference>
<dbReference type="Gene3D" id="3.90.20.20">
    <property type="match status" value="1"/>
</dbReference>
<dbReference type="Gene3D" id="2.30.22.10">
    <property type="entry name" value="Head domain of nucleotide exchange factor GrpE"/>
    <property type="match status" value="1"/>
</dbReference>
<dbReference type="HAMAP" id="MF_01151">
    <property type="entry name" value="GrpE"/>
    <property type="match status" value="1"/>
</dbReference>
<dbReference type="InterPro" id="IPR000740">
    <property type="entry name" value="GrpE"/>
</dbReference>
<dbReference type="InterPro" id="IPR013805">
    <property type="entry name" value="GrpE_coiled_coil"/>
</dbReference>
<dbReference type="InterPro" id="IPR009012">
    <property type="entry name" value="GrpE_head"/>
</dbReference>
<dbReference type="NCBIfam" id="NF010737">
    <property type="entry name" value="PRK14139.1"/>
    <property type="match status" value="1"/>
</dbReference>
<dbReference type="NCBIfam" id="NF010738">
    <property type="entry name" value="PRK14140.1"/>
    <property type="match status" value="1"/>
</dbReference>
<dbReference type="PANTHER" id="PTHR21237">
    <property type="entry name" value="GRPE PROTEIN"/>
    <property type="match status" value="1"/>
</dbReference>
<dbReference type="PANTHER" id="PTHR21237:SF23">
    <property type="entry name" value="GRPE PROTEIN HOMOLOG, MITOCHONDRIAL"/>
    <property type="match status" value="1"/>
</dbReference>
<dbReference type="Pfam" id="PF01025">
    <property type="entry name" value="GrpE"/>
    <property type="match status" value="1"/>
</dbReference>
<dbReference type="PRINTS" id="PR00773">
    <property type="entry name" value="GRPEPROTEIN"/>
</dbReference>
<dbReference type="SUPFAM" id="SSF58014">
    <property type="entry name" value="Coiled-coil domain of nucleotide exchange factor GrpE"/>
    <property type="match status" value="1"/>
</dbReference>
<dbReference type="SUPFAM" id="SSF51064">
    <property type="entry name" value="Head domain of nucleotide exchange factor GrpE"/>
    <property type="match status" value="1"/>
</dbReference>
<dbReference type="PROSITE" id="PS01071">
    <property type="entry name" value="GRPE"/>
    <property type="match status" value="1"/>
</dbReference>
<accession>A1WGK0</accession>
<keyword id="KW-0143">Chaperone</keyword>
<keyword id="KW-0963">Cytoplasm</keyword>
<keyword id="KW-1185">Reference proteome</keyword>
<keyword id="KW-0346">Stress response</keyword>
<name>GRPE_VEREI</name>
<reference key="1">
    <citation type="submission" date="2006-12" db="EMBL/GenBank/DDBJ databases">
        <title>Complete sequence of chromosome 1 of Verminephrobacter eiseniae EF01-2.</title>
        <authorList>
            <person name="Copeland A."/>
            <person name="Lucas S."/>
            <person name="Lapidus A."/>
            <person name="Barry K."/>
            <person name="Detter J.C."/>
            <person name="Glavina del Rio T."/>
            <person name="Dalin E."/>
            <person name="Tice H."/>
            <person name="Pitluck S."/>
            <person name="Chertkov O."/>
            <person name="Brettin T."/>
            <person name="Bruce D."/>
            <person name="Han C."/>
            <person name="Tapia R."/>
            <person name="Gilna P."/>
            <person name="Schmutz J."/>
            <person name="Larimer F."/>
            <person name="Land M."/>
            <person name="Hauser L."/>
            <person name="Kyrpides N."/>
            <person name="Kim E."/>
            <person name="Stahl D."/>
            <person name="Richardson P."/>
        </authorList>
    </citation>
    <scope>NUCLEOTIDE SEQUENCE [LARGE SCALE GENOMIC DNA]</scope>
    <source>
        <strain>EF01-2</strain>
    </source>
</reference>
<comment type="function">
    <text evidence="1">Participates actively in the response to hyperosmotic and heat shock by preventing the aggregation of stress-denatured proteins, in association with DnaK and GrpE. It is the nucleotide exchange factor for DnaK and may function as a thermosensor. Unfolded proteins bind initially to DnaJ; upon interaction with the DnaJ-bound protein, DnaK hydrolyzes its bound ATP, resulting in the formation of a stable complex. GrpE releases ADP from DnaK; ATP binding to DnaK triggers the release of the substrate protein, thus completing the reaction cycle. Several rounds of ATP-dependent interactions between DnaJ, DnaK and GrpE are required for fully efficient folding.</text>
</comment>
<comment type="subunit">
    <text evidence="1">Homodimer.</text>
</comment>
<comment type="subcellular location">
    <subcellularLocation>
        <location evidence="1">Cytoplasm</location>
    </subcellularLocation>
</comment>
<comment type="similarity">
    <text evidence="1">Belongs to the GrpE family.</text>
</comment>
<evidence type="ECO:0000255" key="1">
    <source>
        <dbReference type="HAMAP-Rule" id="MF_01151"/>
    </source>
</evidence>
<feature type="chain" id="PRO_1000137640" description="Protein GrpE">
    <location>
        <begin position="1"/>
        <end position="181"/>
    </location>
</feature>
<organism>
    <name type="scientific">Verminephrobacter eiseniae (strain EF01-2)</name>
    <dbReference type="NCBI Taxonomy" id="391735"/>
    <lineage>
        <taxon>Bacteria</taxon>
        <taxon>Pseudomonadati</taxon>
        <taxon>Pseudomonadota</taxon>
        <taxon>Betaproteobacteria</taxon>
        <taxon>Burkholderiales</taxon>
        <taxon>Comamonadaceae</taxon>
        <taxon>Verminephrobacter</taxon>
    </lineage>
</organism>